<protein>
    <recommendedName>
        <fullName evidence="1">Damage-control phosphatase ARMT1</fullName>
        <ecNumber evidence="1">3.1.3.-</ecNumber>
    </recommendedName>
    <alternativeName>
        <fullName evidence="5">Acidic residue methyltransferase 1</fullName>
    </alternativeName>
    <alternativeName>
        <fullName evidence="6">Protein-glutamate O-methyltransferase</fullName>
        <ecNumber evidence="7">2.1.1.-</ecNumber>
    </alternativeName>
    <alternativeName>
        <fullName evidence="1">Sugar phosphate phosphatase ARMT1</fullName>
    </alternativeName>
</protein>
<gene>
    <name evidence="5 8" type="primary">ARMT1</name>
    <name evidence="8" type="synonym">C6orf211</name>
</gene>
<keyword id="KW-0002">3D-structure</keyword>
<keyword id="KW-0007">Acetylation</keyword>
<keyword id="KW-0227">DNA damage</keyword>
<keyword id="KW-0378">Hydrolase</keyword>
<keyword id="KW-0464">Manganese</keyword>
<keyword id="KW-0479">Metal-binding</keyword>
<keyword id="KW-0488">Methylation</keyword>
<keyword id="KW-0489">Methyltransferase</keyword>
<keyword id="KW-0533">Nickel</keyword>
<keyword id="KW-0597">Phosphoprotein</keyword>
<keyword id="KW-1267">Proteomics identification</keyword>
<keyword id="KW-1185">Reference proteome</keyword>
<keyword id="KW-0949">S-adenosyl-L-methionine</keyword>
<keyword id="KW-0808">Transferase</keyword>
<organism>
    <name type="scientific">Homo sapiens</name>
    <name type="common">Human</name>
    <dbReference type="NCBI Taxonomy" id="9606"/>
    <lineage>
        <taxon>Eukaryota</taxon>
        <taxon>Metazoa</taxon>
        <taxon>Chordata</taxon>
        <taxon>Craniata</taxon>
        <taxon>Vertebrata</taxon>
        <taxon>Euteleostomi</taxon>
        <taxon>Mammalia</taxon>
        <taxon>Eutheria</taxon>
        <taxon>Euarchontoglires</taxon>
        <taxon>Primates</taxon>
        <taxon>Haplorrhini</taxon>
        <taxon>Catarrhini</taxon>
        <taxon>Hominidae</taxon>
        <taxon>Homo</taxon>
    </lineage>
</organism>
<feature type="initiator methionine" description="Removed" evidence="9 11">
    <location>
        <position position="1"/>
    </location>
</feature>
<feature type="chain" id="PRO_0000230795" description="Damage-control phosphatase ARMT1">
    <location>
        <begin position="2"/>
        <end position="441"/>
    </location>
</feature>
<feature type="short sequence motif" description="Subfamily III RTxK motif" evidence="1">
    <location>
        <begin position="401"/>
        <end position="404"/>
    </location>
</feature>
<feature type="binding site" evidence="1">
    <location>
        <begin position="253"/>
        <end position="254"/>
    </location>
    <ligand>
        <name>substrate</name>
    </ligand>
</feature>
<feature type="binding site" evidence="1">
    <location>
        <position position="253"/>
    </location>
    <ligand>
        <name>Mn(2+)</name>
        <dbReference type="ChEBI" id="CHEBI:29035"/>
        <note>catalytic</note>
    </ligand>
</feature>
<feature type="binding site" evidence="1">
    <location>
        <position position="254"/>
    </location>
    <ligand>
        <name>Mn(2+)</name>
        <dbReference type="ChEBI" id="CHEBI:29035"/>
        <note>catalytic</note>
    </ligand>
</feature>
<feature type="binding site" evidence="7">
    <location>
        <position position="258"/>
    </location>
    <ligand>
        <name>S-adenosyl-L-methionine</name>
        <dbReference type="ChEBI" id="CHEBI:59789"/>
    </ligand>
</feature>
<feature type="binding site" evidence="1">
    <location>
        <position position="291"/>
    </location>
    <ligand>
        <name>Mn(2+)</name>
        <dbReference type="ChEBI" id="CHEBI:29035"/>
        <note>catalytic</note>
    </ligand>
</feature>
<feature type="binding site" evidence="7">
    <location>
        <position position="291"/>
    </location>
    <ligand>
        <name>S-adenosyl-L-methionine</name>
        <dbReference type="ChEBI" id="CHEBI:59789"/>
    </ligand>
</feature>
<feature type="binding site" evidence="1">
    <location>
        <begin position="367"/>
        <end position="371"/>
    </location>
    <ligand>
        <name>substrate</name>
    </ligand>
</feature>
<feature type="binding site" evidence="1">
    <location>
        <position position="404"/>
    </location>
    <ligand>
        <name>substrate</name>
    </ligand>
</feature>
<feature type="modified residue" description="N-acetylalanine" evidence="9 11">
    <location>
        <position position="2"/>
    </location>
</feature>
<feature type="modified residue" description="N6-acetyllysine" evidence="10">
    <location>
        <position position="40"/>
    </location>
</feature>
<feature type="modified residue" description="Phosphoserine" evidence="12">
    <location>
        <position position="102"/>
    </location>
</feature>
<feature type="sequence variant" id="VAR_053090" description="In dbSNP:rs35036943.">
    <original>K</original>
    <variation>N</variation>
    <location>
        <position position="73"/>
    </location>
</feature>
<feature type="sequence variant" id="VAR_025791" description="In dbSNP:rs17850732." evidence="2">
    <original>P</original>
    <variation>R</variation>
    <location>
        <position position="77"/>
    </location>
</feature>
<feature type="sequence variant" id="VAR_053091" description="In dbSNP:rs35734927.">
    <original>G</original>
    <variation>E</variation>
    <location>
        <position position="150"/>
    </location>
</feature>
<feature type="sequence variant" id="VAR_053092" description="In dbSNP:rs34437617.">
    <original>S</original>
    <variation>A</variation>
    <location>
        <position position="154"/>
    </location>
</feature>
<feature type="sequence variant" id="VAR_053093" description="In dbSNP:rs36037706.">
    <original>H</original>
    <variation>P</variation>
    <location>
        <position position="161"/>
    </location>
</feature>
<feature type="sequence variant" id="VAR_053094" description="In dbSNP:rs35989216.">
    <original>I</original>
    <variation>V</variation>
    <location>
        <position position="264"/>
    </location>
</feature>
<feature type="sequence variant" id="VAR_053095" description="In dbSNP:rs35972078.">
    <original>A</original>
    <variation>T</variation>
    <location>
        <position position="317"/>
    </location>
</feature>
<feature type="sequence conflict" description="In Ref. 3; AAH11348." evidence="6" ref="3">
    <original>MY</original>
    <variation>ID</variation>
    <location>
        <begin position="120"/>
        <end position="121"/>
    </location>
</feature>
<feature type="sequence conflict" description="In Ref. 4; CAB53692." evidence="6" ref="4">
    <original>F</original>
    <variation>S</variation>
    <location>
        <position position="148"/>
    </location>
</feature>
<feature type="sequence conflict" description="In Ref. 3; AAH11348." evidence="6" ref="3">
    <original>D</original>
    <variation>Y</variation>
    <location>
        <position position="173"/>
    </location>
</feature>
<feature type="sequence conflict" description="In Ref. 4; CAB53692." evidence="6" ref="4">
    <original>F</original>
    <variation>Y</variation>
    <location>
        <position position="220"/>
    </location>
</feature>
<feature type="helix" evidence="13">
    <location>
        <begin position="16"/>
        <end position="22"/>
    </location>
</feature>
<feature type="helix" evidence="13">
    <location>
        <begin position="24"/>
        <end position="38"/>
    </location>
</feature>
<feature type="helix" evidence="13">
    <location>
        <begin position="40"/>
        <end position="47"/>
    </location>
</feature>
<feature type="helix" evidence="13">
    <location>
        <begin position="49"/>
        <end position="70"/>
    </location>
</feature>
<feature type="helix" evidence="13">
    <location>
        <begin position="85"/>
        <end position="97"/>
    </location>
</feature>
<feature type="helix" evidence="13">
    <location>
        <begin position="101"/>
        <end position="103"/>
    </location>
</feature>
<feature type="turn" evidence="13">
    <location>
        <begin position="108"/>
        <end position="110"/>
    </location>
</feature>
<feature type="helix" evidence="13">
    <location>
        <begin position="113"/>
        <end position="129"/>
    </location>
</feature>
<feature type="helix" evidence="13">
    <location>
        <begin position="141"/>
        <end position="150"/>
    </location>
</feature>
<feature type="helix" evidence="13">
    <location>
        <begin position="152"/>
        <end position="167"/>
    </location>
</feature>
<feature type="helix" evidence="13">
    <location>
        <begin position="168"/>
        <end position="171"/>
    </location>
</feature>
<feature type="helix" evidence="13">
    <location>
        <begin position="174"/>
        <end position="189"/>
    </location>
</feature>
<feature type="turn" evidence="13">
    <location>
        <begin position="215"/>
        <end position="217"/>
    </location>
</feature>
<feature type="helix" evidence="13">
    <location>
        <begin position="218"/>
        <end position="220"/>
    </location>
</feature>
<feature type="strand" evidence="13">
    <location>
        <begin position="221"/>
        <end position="224"/>
    </location>
</feature>
<feature type="helix" evidence="13">
    <location>
        <begin position="226"/>
        <end position="239"/>
    </location>
</feature>
<feature type="strand" evidence="13">
    <location>
        <begin position="247"/>
        <end position="251"/>
    </location>
</feature>
<feature type="helix" evidence="13">
    <location>
        <begin position="256"/>
        <end position="271"/>
    </location>
</feature>
<feature type="strand" evidence="13">
    <location>
        <begin position="276"/>
        <end position="281"/>
    </location>
</feature>
<feature type="strand" evidence="13">
    <location>
        <begin position="283"/>
        <end position="285"/>
    </location>
</feature>
<feature type="turn" evidence="13">
    <location>
        <begin position="288"/>
        <end position="290"/>
    </location>
</feature>
<feature type="helix" evidence="13">
    <location>
        <begin position="294"/>
        <end position="305"/>
    </location>
</feature>
<feature type="helix" evidence="13">
    <location>
        <begin position="310"/>
        <end position="324"/>
    </location>
</feature>
<feature type="strand" evidence="13">
    <location>
        <begin position="327"/>
        <end position="331"/>
    </location>
</feature>
<feature type="helix" evidence="13">
    <location>
        <begin position="334"/>
        <end position="337"/>
    </location>
</feature>
<feature type="helix" evidence="13">
    <location>
        <begin position="342"/>
        <end position="344"/>
    </location>
</feature>
<feature type="helix" evidence="13">
    <location>
        <begin position="345"/>
        <end position="348"/>
    </location>
</feature>
<feature type="helix" evidence="13">
    <location>
        <begin position="350"/>
        <end position="356"/>
    </location>
</feature>
<feature type="strand" evidence="13">
    <location>
        <begin position="360"/>
        <end position="365"/>
    </location>
</feature>
<feature type="helix" evidence="13">
    <location>
        <begin position="366"/>
        <end position="373"/>
    </location>
</feature>
<feature type="turn" evidence="13">
    <location>
        <begin position="374"/>
        <end position="376"/>
    </location>
</feature>
<feature type="helix" evidence="13">
    <location>
        <begin position="385"/>
        <end position="388"/>
    </location>
</feature>
<feature type="turn" evidence="13">
    <location>
        <begin position="389"/>
        <end position="391"/>
    </location>
</feature>
<feature type="strand" evidence="13">
    <location>
        <begin position="397"/>
        <end position="402"/>
    </location>
</feature>
<feature type="helix" evidence="13">
    <location>
        <begin position="415"/>
        <end position="422"/>
    </location>
</feature>
<feature type="helix" evidence="13">
    <location>
        <begin position="426"/>
        <end position="428"/>
    </location>
</feature>
<feature type="strand" evidence="13">
    <location>
        <begin position="433"/>
        <end position="439"/>
    </location>
</feature>
<dbReference type="EC" id="3.1.3.-" evidence="1"/>
<dbReference type="EC" id="2.1.1.-" evidence="7"/>
<dbReference type="EMBL" id="AK022972">
    <property type="protein sequence ID" value="BAB14339.1"/>
    <property type="molecule type" value="mRNA"/>
</dbReference>
<dbReference type="EMBL" id="AL590543">
    <property type="status" value="NOT_ANNOTATED_CDS"/>
    <property type="molecule type" value="Genomic_DNA"/>
</dbReference>
<dbReference type="EMBL" id="BC011348">
    <property type="protein sequence ID" value="AAH11348.1"/>
    <property type="molecule type" value="mRNA"/>
</dbReference>
<dbReference type="EMBL" id="AL110241">
    <property type="protein sequence ID" value="CAB53692.2"/>
    <property type="molecule type" value="mRNA"/>
</dbReference>
<dbReference type="CCDS" id="CCDS5233.1"/>
<dbReference type="PIR" id="T14772">
    <property type="entry name" value="T14772"/>
</dbReference>
<dbReference type="RefSeq" id="NP_001273491.1">
    <property type="nucleotide sequence ID" value="NM_001286562.1"/>
</dbReference>
<dbReference type="RefSeq" id="NP_078849.1">
    <property type="nucleotide sequence ID" value="NM_024573.3"/>
</dbReference>
<dbReference type="PDB" id="6UMQ">
    <property type="method" value="X-ray"/>
    <property type="resolution" value="1.85 A"/>
    <property type="chains" value="A/B=1-441"/>
</dbReference>
<dbReference type="PDB" id="6UMR">
    <property type="method" value="X-ray"/>
    <property type="resolution" value="2.21 A"/>
    <property type="chains" value="A/B=1-441"/>
</dbReference>
<dbReference type="PDBsum" id="6UMQ"/>
<dbReference type="PDBsum" id="6UMR"/>
<dbReference type="SMR" id="Q9H993"/>
<dbReference type="BioGRID" id="122754">
    <property type="interactions" value="71"/>
</dbReference>
<dbReference type="FunCoup" id="Q9H993">
    <property type="interactions" value="2065"/>
</dbReference>
<dbReference type="IntAct" id="Q9H993">
    <property type="interactions" value="25"/>
</dbReference>
<dbReference type="MINT" id="Q9H993"/>
<dbReference type="STRING" id="9606.ENSP00000356263"/>
<dbReference type="GlyGen" id="Q9H993">
    <property type="glycosylation" value="2 sites, 1 N-linked glycan (1 site), 1 O-linked glycan (1 site)"/>
</dbReference>
<dbReference type="iPTMnet" id="Q9H993"/>
<dbReference type="PhosphoSitePlus" id="Q9H993"/>
<dbReference type="BioMuta" id="ARMT1"/>
<dbReference type="DMDM" id="74752737"/>
<dbReference type="jPOST" id="Q9H993"/>
<dbReference type="MassIVE" id="Q9H993"/>
<dbReference type="PaxDb" id="9606-ENSP00000356263"/>
<dbReference type="PeptideAtlas" id="Q9H993"/>
<dbReference type="ProteomicsDB" id="81298"/>
<dbReference type="Pumba" id="Q9H993"/>
<dbReference type="Antibodypedia" id="1089">
    <property type="antibodies" value="158 antibodies from 24 providers"/>
</dbReference>
<dbReference type="DNASU" id="79624"/>
<dbReference type="Ensembl" id="ENST00000367294.4">
    <property type="protein sequence ID" value="ENSP00000356263.3"/>
    <property type="gene ID" value="ENSG00000146476.11"/>
</dbReference>
<dbReference type="GeneID" id="79624"/>
<dbReference type="KEGG" id="hsa:79624"/>
<dbReference type="MANE-Select" id="ENST00000367294.4">
    <property type="protein sequence ID" value="ENSP00000356263.3"/>
    <property type="RefSeq nucleotide sequence ID" value="NM_024573.3"/>
    <property type="RefSeq protein sequence ID" value="NP_078849.1"/>
</dbReference>
<dbReference type="UCSC" id="uc003qok.3">
    <property type="organism name" value="human"/>
</dbReference>
<dbReference type="AGR" id="HGNC:17872"/>
<dbReference type="CTD" id="79624"/>
<dbReference type="DisGeNET" id="79624"/>
<dbReference type="GeneCards" id="ARMT1"/>
<dbReference type="HGNC" id="HGNC:17872">
    <property type="gene designation" value="ARMT1"/>
</dbReference>
<dbReference type="HPA" id="ENSG00000146476">
    <property type="expression patterns" value="Low tissue specificity"/>
</dbReference>
<dbReference type="MIM" id="616332">
    <property type="type" value="gene"/>
</dbReference>
<dbReference type="neXtProt" id="NX_Q9H993"/>
<dbReference type="OpenTargets" id="ENSG00000146476"/>
<dbReference type="PharmGKB" id="PA134870747"/>
<dbReference type="VEuPathDB" id="HostDB:ENSG00000146476"/>
<dbReference type="eggNOG" id="KOG3870">
    <property type="taxonomic scope" value="Eukaryota"/>
</dbReference>
<dbReference type="GeneTree" id="ENSGT00530000064023"/>
<dbReference type="HOGENOM" id="CLU_030117_0_0_1"/>
<dbReference type="InParanoid" id="Q9H993"/>
<dbReference type="OMA" id="IFARQKM"/>
<dbReference type="OrthoDB" id="541375at2759"/>
<dbReference type="PAN-GO" id="Q9H993">
    <property type="GO annotations" value="2 GO annotations based on evolutionary models"/>
</dbReference>
<dbReference type="PhylomeDB" id="Q9H993"/>
<dbReference type="TreeFam" id="TF314853"/>
<dbReference type="PathwayCommons" id="Q9H993"/>
<dbReference type="SignaLink" id="Q9H993"/>
<dbReference type="BioGRID-ORCS" id="79624">
    <property type="hits" value="26 hits in 1122 CRISPR screens"/>
</dbReference>
<dbReference type="ChiTaRS" id="ARMT1">
    <property type="organism name" value="human"/>
</dbReference>
<dbReference type="GenomeRNAi" id="79624"/>
<dbReference type="Pharos" id="Q9H993">
    <property type="development level" value="Tbio"/>
</dbReference>
<dbReference type="PRO" id="PR:Q9H993"/>
<dbReference type="Proteomes" id="UP000005640">
    <property type="component" value="Chromosome 6"/>
</dbReference>
<dbReference type="RNAct" id="Q9H993">
    <property type="molecule type" value="protein"/>
</dbReference>
<dbReference type="Bgee" id="ENSG00000146476">
    <property type="expression patterns" value="Expressed in cartilage tissue and 205 other cell types or tissues"/>
</dbReference>
<dbReference type="ExpressionAtlas" id="Q9H993">
    <property type="expression patterns" value="baseline and differential"/>
</dbReference>
<dbReference type="GO" id="GO:0019899">
    <property type="term" value="F:enzyme binding"/>
    <property type="evidence" value="ECO:0000353"/>
    <property type="project" value="UniProtKB"/>
</dbReference>
<dbReference type="GO" id="GO:0097023">
    <property type="term" value="F:fructose 6-phosphate aldolase activity"/>
    <property type="evidence" value="ECO:0007669"/>
    <property type="project" value="RHEA"/>
</dbReference>
<dbReference type="GO" id="GO:0103026">
    <property type="term" value="F:fructose-1-phosphatase activity"/>
    <property type="evidence" value="ECO:0007669"/>
    <property type="project" value="RHEA"/>
</dbReference>
<dbReference type="GO" id="GO:0046872">
    <property type="term" value="F:metal ion binding"/>
    <property type="evidence" value="ECO:0007669"/>
    <property type="project" value="UniProtKB-KW"/>
</dbReference>
<dbReference type="GO" id="GO:0016791">
    <property type="term" value="F:phosphatase activity"/>
    <property type="evidence" value="ECO:0000318"/>
    <property type="project" value="GO_Central"/>
</dbReference>
<dbReference type="GO" id="GO:0051998">
    <property type="term" value="F:protein carboxyl O-methyltransferase activity"/>
    <property type="evidence" value="ECO:0000314"/>
    <property type="project" value="UniProtKB"/>
</dbReference>
<dbReference type="GO" id="GO:0008983">
    <property type="term" value="F:protein-glutamate O-methyltransferase activity"/>
    <property type="evidence" value="ECO:0007669"/>
    <property type="project" value="RHEA"/>
</dbReference>
<dbReference type="GO" id="GO:0008757">
    <property type="term" value="F:S-adenosylmethionine-dependent methyltransferase activity"/>
    <property type="evidence" value="ECO:0000314"/>
    <property type="project" value="UniProtKB"/>
</dbReference>
<dbReference type="GO" id="GO:0006974">
    <property type="term" value="P:DNA damage response"/>
    <property type="evidence" value="ECO:0000315"/>
    <property type="project" value="UniProtKB"/>
</dbReference>
<dbReference type="GO" id="GO:0032259">
    <property type="term" value="P:methylation"/>
    <property type="evidence" value="ECO:0007669"/>
    <property type="project" value="UniProtKB-KW"/>
</dbReference>
<dbReference type="FunFam" id="3.40.50.10880:FF:000002">
    <property type="entry name" value="Acidic residue methyltransferase 1"/>
    <property type="match status" value="1"/>
</dbReference>
<dbReference type="FunFam" id="1.20.930.60:FF:000001">
    <property type="entry name" value="protein-glutamate O-methyltransferase isoform X1"/>
    <property type="match status" value="1"/>
</dbReference>
<dbReference type="Gene3D" id="1.20.930.60">
    <property type="match status" value="1"/>
</dbReference>
<dbReference type="Gene3D" id="3.40.50.10880">
    <property type="entry name" value="Uncharacterised protein PF01937, DUF89, domain 3"/>
    <property type="match status" value="1"/>
</dbReference>
<dbReference type="InterPro" id="IPR036075">
    <property type="entry name" value="ARMT-1-like_metal-bd_sf"/>
</dbReference>
<dbReference type="InterPro" id="IPR039763">
    <property type="entry name" value="ARMT1"/>
</dbReference>
<dbReference type="InterPro" id="IPR002791">
    <property type="entry name" value="ARMT1-like_metal-bd"/>
</dbReference>
<dbReference type="PANTHER" id="PTHR12260">
    <property type="entry name" value="DAMAGE-CONTROL PHOSPHATASE ARMT1"/>
    <property type="match status" value="1"/>
</dbReference>
<dbReference type="PANTHER" id="PTHR12260:SF6">
    <property type="entry name" value="DAMAGE-CONTROL PHOSPHATASE ARMT1"/>
    <property type="match status" value="1"/>
</dbReference>
<dbReference type="Pfam" id="PF01937">
    <property type="entry name" value="ARMT1-like_dom"/>
    <property type="match status" value="1"/>
</dbReference>
<dbReference type="SUPFAM" id="SSF111321">
    <property type="entry name" value="AF1104-like"/>
    <property type="match status" value="1"/>
</dbReference>
<proteinExistence type="evidence at protein level"/>
<reference key="1">
    <citation type="journal article" date="2004" name="Nat. Genet.">
        <title>Complete sequencing and characterization of 21,243 full-length human cDNAs.</title>
        <authorList>
            <person name="Ota T."/>
            <person name="Suzuki Y."/>
            <person name="Nishikawa T."/>
            <person name="Otsuki T."/>
            <person name="Sugiyama T."/>
            <person name="Irie R."/>
            <person name="Wakamatsu A."/>
            <person name="Hayashi K."/>
            <person name="Sato H."/>
            <person name="Nagai K."/>
            <person name="Kimura K."/>
            <person name="Makita H."/>
            <person name="Sekine M."/>
            <person name="Obayashi M."/>
            <person name="Nishi T."/>
            <person name="Shibahara T."/>
            <person name="Tanaka T."/>
            <person name="Ishii S."/>
            <person name="Yamamoto J."/>
            <person name="Saito K."/>
            <person name="Kawai Y."/>
            <person name="Isono Y."/>
            <person name="Nakamura Y."/>
            <person name="Nagahari K."/>
            <person name="Murakami K."/>
            <person name="Yasuda T."/>
            <person name="Iwayanagi T."/>
            <person name="Wagatsuma M."/>
            <person name="Shiratori A."/>
            <person name="Sudo H."/>
            <person name="Hosoiri T."/>
            <person name="Kaku Y."/>
            <person name="Kodaira H."/>
            <person name="Kondo H."/>
            <person name="Sugawara M."/>
            <person name="Takahashi M."/>
            <person name="Kanda K."/>
            <person name="Yokoi T."/>
            <person name="Furuya T."/>
            <person name="Kikkawa E."/>
            <person name="Omura Y."/>
            <person name="Abe K."/>
            <person name="Kamihara K."/>
            <person name="Katsuta N."/>
            <person name="Sato K."/>
            <person name="Tanikawa M."/>
            <person name="Yamazaki M."/>
            <person name="Ninomiya K."/>
            <person name="Ishibashi T."/>
            <person name="Yamashita H."/>
            <person name="Murakawa K."/>
            <person name="Fujimori K."/>
            <person name="Tanai H."/>
            <person name="Kimata M."/>
            <person name="Watanabe M."/>
            <person name="Hiraoka S."/>
            <person name="Chiba Y."/>
            <person name="Ishida S."/>
            <person name="Ono Y."/>
            <person name="Takiguchi S."/>
            <person name="Watanabe S."/>
            <person name="Yosida M."/>
            <person name="Hotuta T."/>
            <person name="Kusano J."/>
            <person name="Kanehori K."/>
            <person name="Takahashi-Fujii A."/>
            <person name="Hara H."/>
            <person name="Tanase T.-O."/>
            <person name="Nomura Y."/>
            <person name="Togiya S."/>
            <person name="Komai F."/>
            <person name="Hara R."/>
            <person name="Takeuchi K."/>
            <person name="Arita M."/>
            <person name="Imose N."/>
            <person name="Musashino K."/>
            <person name="Yuuki H."/>
            <person name="Oshima A."/>
            <person name="Sasaki N."/>
            <person name="Aotsuka S."/>
            <person name="Yoshikawa Y."/>
            <person name="Matsunawa H."/>
            <person name="Ichihara T."/>
            <person name="Shiohata N."/>
            <person name="Sano S."/>
            <person name="Moriya S."/>
            <person name="Momiyama H."/>
            <person name="Satoh N."/>
            <person name="Takami S."/>
            <person name="Terashima Y."/>
            <person name="Suzuki O."/>
            <person name="Nakagawa S."/>
            <person name="Senoh A."/>
            <person name="Mizoguchi H."/>
            <person name="Goto Y."/>
            <person name="Shimizu F."/>
            <person name="Wakebe H."/>
            <person name="Hishigaki H."/>
            <person name="Watanabe T."/>
            <person name="Sugiyama A."/>
            <person name="Takemoto M."/>
            <person name="Kawakami B."/>
            <person name="Yamazaki M."/>
            <person name="Watanabe K."/>
            <person name="Kumagai A."/>
            <person name="Itakura S."/>
            <person name="Fukuzumi Y."/>
            <person name="Fujimori Y."/>
            <person name="Komiyama M."/>
            <person name="Tashiro H."/>
            <person name="Tanigami A."/>
            <person name="Fujiwara T."/>
            <person name="Ono T."/>
            <person name="Yamada K."/>
            <person name="Fujii Y."/>
            <person name="Ozaki K."/>
            <person name="Hirao M."/>
            <person name="Ohmori Y."/>
            <person name="Kawabata A."/>
            <person name="Hikiji T."/>
            <person name="Kobatake N."/>
            <person name="Inagaki H."/>
            <person name="Ikema Y."/>
            <person name="Okamoto S."/>
            <person name="Okitani R."/>
            <person name="Kawakami T."/>
            <person name="Noguchi S."/>
            <person name="Itoh T."/>
            <person name="Shigeta K."/>
            <person name="Senba T."/>
            <person name="Matsumura K."/>
            <person name="Nakajima Y."/>
            <person name="Mizuno T."/>
            <person name="Morinaga M."/>
            <person name="Sasaki M."/>
            <person name="Togashi T."/>
            <person name="Oyama M."/>
            <person name="Hata H."/>
            <person name="Watanabe M."/>
            <person name="Komatsu T."/>
            <person name="Mizushima-Sugano J."/>
            <person name="Satoh T."/>
            <person name="Shirai Y."/>
            <person name="Takahashi Y."/>
            <person name="Nakagawa K."/>
            <person name="Okumura K."/>
            <person name="Nagase T."/>
            <person name="Nomura N."/>
            <person name="Kikuchi H."/>
            <person name="Masuho Y."/>
            <person name="Yamashita R."/>
            <person name="Nakai K."/>
            <person name="Yada T."/>
            <person name="Nakamura Y."/>
            <person name="Ohara O."/>
            <person name="Isogai T."/>
            <person name="Sugano S."/>
        </authorList>
    </citation>
    <scope>NUCLEOTIDE SEQUENCE [LARGE SCALE MRNA]</scope>
    <source>
        <tissue>Teratocarcinoma</tissue>
    </source>
</reference>
<reference key="2">
    <citation type="journal article" date="2003" name="Nature">
        <title>The DNA sequence and analysis of human chromosome 6.</title>
        <authorList>
            <person name="Mungall A.J."/>
            <person name="Palmer S.A."/>
            <person name="Sims S.K."/>
            <person name="Edwards C.A."/>
            <person name="Ashurst J.L."/>
            <person name="Wilming L."/>
            <person name="Jones M.C."/>
            <person name="Horton R."/>
            <person name="Hunt S.E."/>
            <person name="Scott C.E."/>
            <person name="Gilbert J.G.R."/>
            <person name="Clamp M.E."/>
            <person name="Bethel G."/>
            <person name="Milne S."/>
            <person name="Ainscough R."/>
            <person name="Almeida J.P."/>
            <person name="Ambrose K.D."/>
            <person name="Andrews T.D."/>
            <person name="Ashwell R.I.S."/>
            <person name="Babbage A.K."/>
            <person name="Bagguley C.L."/>
            <person name="Bailey J."/>
            <person name="Banerjee R."/>
            <person name="Barker D.J."/>
            <person name="Barlow K.F."/>
            <person name="Bates K."/>
            <person name="Beare D.M."/>
            <person name="Beasley H."/>
            <person name="Beasley O."/>
            <person name="Bird C.P."/>
            <person name="Blakey S.E."/>
            <person name="Bray-Allen S."/>
            <person name="Brook J."/>
            <person name="Brown A.J."/>
            <person name="Brown J.Y."/>
            <person name="Burford D.C."/>
            <person name="Burrill W."/>
            <person name="Burton J."/>
            <person name="Carder C."/>
            <person name="Carter N.P."/>
            <person name="Chapman J.C."/>
            <person name="Clark S.Y."/>
            <person name="Clark G."/>
            <person name="Clee C.M."/>
            <person name="Clegg S."/>
            <person name="Cobley V."/>
            <person name="Collier R.E."/>
            <person name="Collins J.E."/>
            <person name="Colman L.K."/>
            <person name="Corby N.R."/>
            <person name="Coville G.J."/>
            <person name="Culley K.M."/>
            <person name="Dhami P."/>
            <person name="Davies J."/>
            <person name="Dunn M."/>
            <person name="Earthrowl M.E."/>
            <person name="Ellington A.E."/>
            <person name="Evans K.A."/>
            <person name="Faulkner L."/>
            <person name="Francis M.D."/>
            <person name="Frankish A."/>
            <person name="Frankland J."/>
            <person name="French L."/>
            <person name="Garner P."/>
            <person name="Garnett J."/>
            <person name="Ghori M.J."/>
            <person name="Gilby L.M."/>
            <person name="Gillson C.J."/>
            <person name="Glithero R.J."/>
            <person name="Grafham D.V."/>
            <person name="Grant M."/>
            <person name="Gribble S."/>
            <person name="Griffiths C."/>
            <person name="Griffiths M.N.D."/>
            <person name="Hall R."/>
            <person name="Halls K.S."/>
            <person name="Hammond S."/>
            <person name="Harley J.L."/>
            <person name="Hart E.A."/>
            <person name="Heath P.D."/>
            <person name="Heathcott R."/>
            <person name="Holmes S.J."/>
            <person name="Howden P.J."/>
            <person name="Howe K.L."/>
            <person name="Howell G.R."/>
            <person name="Huckle E."/>
            <person name="Humphray S.J."/>
            <person name="Humphries M.D."/>
            <person name="Hunt A.R."/>
            <person name="Johnson C.M."/>
            <person name="Joy A.A."/>
            <person name="Kay M."/>
            <person name="Keenan S.J."/>
            <person name="Kimberley A.M."/>
            <person name="King A."/>
            <person name="Laird G.K."/>
            <person name="Langford C."/>
            <person name="Lawlor S."/>
            <person name="Leongamornlert D.A."/>
            <person name="Leversha M."/>
            <person name="Lloyd C.R."/>
            <person name="Lloyd D.M."/>
            <person name="Loveland J.E."/>
            <person name="Lovell J."/>
            <person name="Martin S."/>
            <person name="Mashreghi-Mohammadi M."/>
            <person name="Maslen G.L."/>
            <person name="Matthews L."/>
            <person name="McCann O.T."/>
            <person name="McLaren S.J."/>
            <person name="McLay K."/>
            <person name="McMurray A."/>
            <person name="Moore M.J.F."/>
            <person name="Mullikin J.C."/>
            <person name="Niblett D."/>
            <person name="Nickerson T."/>
            <person name="Novik K.L."/>
            <person name="Oliver K."/>
            <person name="Overton-Larty E.K."/>
            <person name="Parker A."/>
            <person name="Patel R."/>
            <person name="Pearce A.V."/>
            <person name="Peck A.I."/>
            <person name="Phillimore B.J.C.T."/>
            <person name="Phillips S."/>
            <person name="Plumb R.W."/>
            <person name="Porter K.M."/>
            <person name="Ramsey Y."/>
            <person name="Ranby S.A."/>
            <person name="Rice C.M."/>
            <person name="Ross M.T."/>
            <person name="Searle S.M."/>
            <person name="Sehra H.K."/>
            <person name="Sheridan E."/>
            <person name="Skuce C.D."/>
            <person name="Smith S."/>
            <person name="Smith M."/>
            <person name="Spraggon L."/>
            <person name="Squares S.L."/>
            <person name="Steward C.A."/>
            <person name="Sycamore N."/>
            <person name="Tamlyn-Hall G."/>
            <person name="Tester J."/>
            <person name="Theaker A.J."/>
            <person name="Thomas D.W."/>
            <person name="Thorpe A."/>
            <person name="Tracey A."/>
            <person name="Tromans A."/>
            <person name="Tubby B."/>
            <person name="Wall M."/>
            <person name="Wallis J.M."/>
            <person name="West A.P."/>
            <person name="White S.S."/>
            <person name="Whitehead S.L."/>
            <person name="Whittaker H."/>
            <person name="Wild A."/>
            <person name="Willey D.J."/>
            <person name="Wilmer T.E."/>
            <person name="Wood J.M."/>
            <person name="Wray P.W."/>
            <person name="Wyatt J.C."/>
            <person name="Young L."/>
            <person name="Younger R.M."/>
            <person name="Bentley D.R."/>
            <person name="Coulson A."/>
            <person name="Durbin R.M."/>
            <person name="Hubbard T."/>
            <person name="Sulston J.E."/>
            <person name="Dunham I."/>
            <person name="Rogers J."/>
            <person name="Beck S."/>
        </authorList>
    </citation>
    <scope>NUCLEOTIDE SEQUENCE [LARGE SCALE GENOMIC DNA]</scope>
</reference>
<reference key="3">
    <citation type="journal article" date="2004" name="Genome Res.">
        <title>The status, quality, and expansion of the NIH full-length cDNA project: the Mammalian Gene Collection (MGC).</title>
        <authorList>
            <consortium name="The MGC Project Team"/>
        </authorList>
    </citation>
    <scope>NUCLEOTIDE SEQUENCE [LARGE SCALE MRNA]</scope>
    <scope>VARIANT ARG-77</scope>
    <source>
        <tissue>Lymph</tissue>
    </source>
</reference>
<reference key="4">
    <citation type="journal article" date="2007" name="BMC Genomics">
        <title>The full-ORF clone resource of the German cDNA consortium.</title>
        <authorList>
            <person name="Bechtel S."/>
            <person name="Rosenfelder H."/>
            <person name="Duda A."/>
            <person name="Schmidt C.P."/>
            <person name="Ernst U."/>
            <person name="Wellenreuther R."/>
            <person name="Mehrle A."/>
            <person name="Schuster C."/>
            <person name="Bahr A."/>
            <person name="Bloecker H."/>
            <person name="Heubner D."/>
            <person name="Hoerlein A."/>
            <person name="Michel G."/>
            <person name="Wedler H."/>
            <person name="Koehrer K."/>
            <person name="Ottenwaelder B."/>
            <person name="Poustka A."/>
            <person name="Wiemann S."/>
            <person name="Schupp I."/>
        </authorList>
    </citation>
    <scope>NUCLEOTIDE SEQUENCE [LARGE SCALE MRNA] OF 1-238</scope>
    <source>
        <tissue>Fetal kidney</tissue>
    </source>
</reference>
<reference key="5">
    <citation type="journal article" date="2009" name="Anal. Chem.">
        <title>Lys-N and trypsin cover complementary parts of the phosphoproteome in a refined SCX-based approach.</title>
        <authorList>
            <person name="Gauci S."/>
            <person name="Helbig A.O."/>
            <person name="Slijper M."/>
            <person name="Krijgsveld J."/>
            <person name="Heck A.J."/>
            <person name="Mohammed S."/>
        </authorList>
    </citation>
    <scope>ACETYLATION [LARGE SCALE ANALYSIS] AT ALA-2</scope>
    <scope>CLEAVAGE OF INITIATOR METHIONINE [LARGE SCALE ANALYSIS]</scope>
    <scope>IDENTIFICATION BY MASS SPECTROMETRY [LARGE SCALE ANALYSIS]</scope>
</reference>
<reference key="6">
    <citation type="journal article" date="2009" name="Science">
        <title>Lysine acetylation targets protein complexes and co-regulates major cellular functions.</title>
        <authorList>
            <person name="Choudhary C."/>
            <person name="Kumar C."/>
            <person name="Gnad F."/>
            <person name="Nielsen M.L."/>
            <person name="Rehman M."/>
            <person name="Walther T.C."/>
            <person name="Olsen J.V."/>
            <person name="Mann M."/>
        </authorList>
    </citation>
    <scope>ACETYLATION [LARGE SCALE ANALYSIS] AT LYS-40</scope>
    <scope>IDENTIFICATION BY MASS SPECTROMETRY [LARGE SCALE ANALYSIS]</scope>
</reference>
<reference key="7">
    <citation type="journal article" date="2011" name="BMC Syst. Biol.">
        <title>Initial characterization of the human central proteome.</title>
        <authorList>
            <person name="Burkard T.R."/>
            <person name="Planyavsky M."/>
            <person name="Kaupe I."/>
            <person name="Breitwieser F.P."/>
            <person name="Buerckstuemmer T."/>
            <person name="Bennett K.L."/>
            <person name="Superti-Furga G."/>
            <person name="Colinge J."/>
        </authorList>
    </citation>
    <scope>IDENTIFICATION BY MASS SPECTROMETRY [LARGE SCALE ANALYSIS]</scope>
</reference>
<reference key="8">
    <citation type="journal article" date="2012" name="Proc. Natl. Acad. Sci. U.S.A.">
        <title>N-terminal acetylome analyses and functional insights of the N-terminal acetyltransferase NatB.</title>
        <authorList>
            <person name="Van Damme P."/>
            <person name="Lasa M."/>
            <person name="Polevoda B."/>
            <person name="Gazquez C."/>
            <person name="Elosegui-Artola A."/>
            <person name="Kim D.S."/>
            <person name="De Juan-Pardo E."/>
            <person name="Demeyer K."/>
            <person name="Hole K."/>
            <person name="Larrea E."/>
            <person name="Timmerman E."/>
            <person name="Prieto J."/>
            <person name="Arnesen T."/>
            <person name="Sherman F."/>
            <person name="Gevaert K."/>
            <person name="Aldabe R."/>
        </authorList>
    </citation>
    <scope>ACETYLATION [LARGE SCALE ANALYSIS] AT ALA-2</scope>
    <scope>CLEAVAGE OF INITIATOR METHIONINE [LARGE SCALE ANALYSIS]</scope>
    <scope>IDENTIFICATION BY MASS SPECTROMETRY [LARGE SCALE ANALYSIS]</scope>
</reference>
<reference key="9">
    <citation type="journal article" date="2014" name="J. Proteomics">
        <title>An enzyme assisted RP-RPLC approach for in-depth analysis of human liver phosphoproteome.</title>
        <authorList>
            <person name="Bian Y."/>
            <person name="Song C."/>
            <person name="Cheng K."/>
            <person name="Dong M."/>
            <person name="Wang F."/>
            <person name="Huang J."/>
            <person name="Sun D."/>
            <person name="Wang L."/>
            <person name="Ye M."/>
            <person name="Zou H."/>
        </authorList>
    </citation>
    <scope>PHOSPHORYLATION [LARGE SCALE ANALYSIS] AT SER-102</scope>
    <scope>IDENTIFICATION BY MASS SPECTROMETRY [LARGE SCALE ANALYSIS]</scope>
    <source>
        <tissue>Liver</tissue>
    </source>
</reference>
<reference key="10">
    <citation type="journal article" date="2015" name="Cell Rep.">
        <title>Human C6orf211 encodes Armt1, a protein carboxyl methyltransferase that targets PCNA and is linked to the DNA damage response.</title>
        <authorList>
            <person name="Perry J.J."/>
            <person name="Ballard G.D."/>
            <person name="Albert A.E."/>
            <person name="Dobrolecki L.E."/>
            <person name="Malkas L.H."/>
            <person name="Hoelz D.J."/>
        </authorList>
    </citation>
    <scope>FUNCTION</scope>
    <scope>CATALYTIC ACTIVITY</scope>
    <scope>METHYLATION</scope>
</reference>
<reference key="11">
    <citation type="journal article" date="2016" name="Nat. Chem. Biol.">
        <title>A family of metal-dependent phosphatases implicated in metabolite damage-control.</title>
        <authorList>
            <person name="Huang L."/>
            <person name="Khusnutdinova A."/>
            <person name="Nocek B."/>
            <person name="Brown G."/>
            <person name="Xu X."/>
            <person name="Cui H."/>
            <person name="Petit P."/>
            <person name="Flick R."/>
            <person name="Zallot R."/>
            <person name="Balmant K."/>
            <person name="Ziemak M.J."/>
            <person name="Shanklin J."/>
            <person name="de Crecy-Lagard V."/>
            <person name="Fiehn O."/>
            <person name="Gregory J.F. III"/>
            <person name="Joachimiak A."/>
            <person name="Savchenko A."/>
            <person name="Yakunin A.F."/>
            <person name="Hanson A.D."/>
        </authorList>
    </citation>
    <scope>CAUTION</scope>
</reference>
<accession>Q9H993</accession>
<accession>Q96FC6</accession>
<accession>Q9UFY5</accession>
<sequence>MAVVPASLSGQDVGSFAYLTIKDRIPQILTKVIDTLHRHKSEFFEKHGEEGVEAEKKAISLLSKLRNELQTDKPFIPLVEKFVDTDIWNQYLEYQQSLLNESDGKSRWFYSPWLLVECYMYRRIHEAIIQSPPIDYFDVFKESKEQNFYGSQESIIALCTHLQQLIRTIEDLDENQLKDEFFKLLQISLWGNKCDLSLSGGESSSQNTNVLNSLEDLKPFILLNDMEHLWSLLSNCKKTREKASATRVYIVLDNSGFELVTDLILADFLLSSELATEVHFYGKTIPWFVSDTTIHDFNWLIEQVKHSNHKWMSKCGADWEEYIKMGKWVYHNHIFWTLPHEYCAMPQVAPDLYAELQKAHLILFKGDLNYRKLTGDRKWEFSVPFHQALNGFHPAPLCTIRTLKAEIQVGLQPGQGEQLLASEPSWWTTGKYGIFQYDGPL</sequence>
<comment type="function">
    <text evidence="1 3">Metal-dependent phosphatase that shows phosphatase activity against several substrates, including fructose-1-phosphate and fructose-6-phosphate (By similarity). Its preference for fructose-1-phosphate, a strong glycating agent that causes DNA damage rather than a canonical yeast metabolite, suggests a damage-control function in hexose phosphate metabolism (By similarity). Has also been shown to have O-methyltransferase activity that methylates glutamate residues of target proteins to form gamma-glutamyl methyl ester residues (PubMed:25732820). Possibly methylates PCNA, suggesting it is involved in the DNA damage response (PubMed:25732820).</text>
</comment>
<comment type="catalytic activity">
    <reaction evidence="1">
        <text>beta-D-fructose 1-phosphate + H2O = D-fructose + phosphate</text>
        <dbReference type="Rhea" id="RHEA:35603"/>
        <dbReference type="ChEBI" id="CHEBI:15377"/>
        <dbReference type="ChEBI" id="CHEBI:37721"/>
        <dbReference type="ChEBI" id="CHEBI:43474"/>
        <dbReference type="ChEBI" id="CHEBI:138881"/>
    </reaction>
</comment>
<comment type="catalytic activity">
    <reaction evidence="1">
        <text>beta-D-fructose 6-phosphate = dihydroxyacetone + D-glyceraldehyde 3-phosphate</text>
        <dbReference type="Rhea" id="RHEA:28002"/>
        <dbReference type="ChEBI" id="CHEBI:16016"/>
        <dbReference type="ChEBI" id="CHEBI:57634"/>
        <dbReference type="ChEBI" id="CHEBI:59776"/>
    </reaction>
</comment>
<comment type="catalytic activity">
    <reaction evidence="7">
        <text>L-glutamyl-[protein] + S-adenosyl-L-methionine = [protein]-L-glutamate 5-O-methyl ester + S-adenosyl-L-homocysteine</text>
        <dbReference type="Rhea" id="RHEA:24452"/>
        <dbReference type="Rhea" id="RHEA-COMP:10208"/>
        <dbReference type="Rhea" id="RHEA-COMP:10311"/>
        <dbReference type="ChEBI" id="CHEBI:29973"/>
        <dbReference type="ChEBI" id="CHEBI:57856"/>
        <dbReference type="ChEBI" id="CHEBI:59789"/>
        <dbReference type="ChEBI" id="CHEBI:82795"/>
    </reaction>
</comment>
<comment type="cofactor">
    <cofactor evidence="1">
        <name>Mn(2+)</name>
        <dbReference type="ChEBI" id="CHEBI:29035"/>
    </cofactor>
    <cofactor evidence="1">
        <name>Ni(2+)</name>
        <dbReference type="ChEBI" id="CHEBI:49786"/>
    </cofactor>
</comment>
<comment type="interaction">
    <interactant intactId="EBI-1046033">
        <id>Q9H993</id>
    </interactant>
    <interactant intactId="EBI-11959013">
        <id>Q08209-2</id>
        <label>PPP3CA</label>
    </interactant>
    <organismsDiffer>false</organismsDiffer>
    <experiments>4</experiments>
</comment>
<comment type="domain">
    <text evidence="1">Subfamily III proteins have a conserved RTxK motif about 40-50 residues from the C-terminus; the threonine may be replaced by serine or cysteine.</text>
</comment>
<comment type="PTM">
    <text evidence="7">Automethylated.</text>
</comment>
<comment type="similarity">
    <text evidence="6">Belongs to the damage-control phosphatase family. Sugar phosphate phosphatase III subfamily.</text>
</comment>
<comment type="caution">
    <text evidence="4 7">Has been reportedly associated with a protein carboxyl methyltransferase activity, but whether this protein indeed has such an activity remains to be determined (PubMed:25732820). It has been later shown to belong to a family of metal-dependent phosphatases implicated in metabolite damage-control (PubMed:27322068).</text>
</comment>
<evidence type="ECO:0000250" key="1">
    <source>
        <dbReference type="UniProtKB" id="Q04371"/>
    </source>
</evidence>
<evidence type="ECO:0000269" key="2">
    <source>
    </source>
</evidence>
<evidence type="ECO:0000269" key="3">
    <source>
    </source>
</evidence>
<evidence type="ECO:0000269" key="4">
    <source>
    </source>
</evidence>
<evidence type="ECO:0000303" key="5">
    <source>
    </source>
</evidence>
<evidence type="ECO:0000305" key="6"/>
<evidence type="ECO:0000305" key="7">
    <source>
    </source>
</evidence>
<evidence type="ECO:0000312" key="8">
    <source>
        <dbReference type="HGNC" id="HGNC:17872"/>
    </source>
</evidence>
<evidence type="ECO:0007744" key="9">
    <source>
    </source>
</evidence>
<evidence type="ECO:0007744" key="10">
    <source>
    </source>
</evidence>
<evidence type="ECO:0007744" key="11">
    <source>
    </source>
</evidence>
<evidence type="ECO:0007744" key="12">
    <source>
    </source>
</evidence>
<evidence type="ECO:0007829" key="13">
    <source>
        <dbReference type="PDB" id="6UMQ"/>
    </source>
</evidence>
<name>ARMT1_HUMAN</name>